<dbReference type="EC" id="3.1.26.4" evidence="1"/>
<dbReference type="EMBL" id="CP000526">
    <property type="protein sequence ID" value="ABM51748.1"/>
    <property type="molecule type" value="Genomic_DNA"/>
</dbReference>
<dbReference type="RefSeq" id="WP_004191384.1">
    <property type="nucleotide sequence ID" value="NC_008785.1"/>
</dbReference>
<dbReference type="SMR" id="A1V554"/>
<dbReference type="GeneID" id="92979267"/>
<dbReference type="KEGG" id="bmv:BMASAVP1_A2041"/>
<dbReference type="HOGENOM" id="CLU_036532_3_2_4"/>
<dbReference type="GO" id="GO:0005737">
    <property type="term" value="C:cytoplasm"/>
    <property type="evidence" value="ECO:0007669"/>
    <property type="project" value="UniProtKB-SubCell"/>
</dbReference>
<dbReference type="GO" id="GO:0032299">
    <property type="term" value="C:ribonuclease H2 complex"/>
    <property type="evidence" value="ECO:0007669"/>
    <property type="project" value="TreeGrafter"/>
</dbReference>
<dbReference type="GO" id="GO:0030145">
    <property type="term" value="F:manganese ion binding"/>
    <property type="evidence" value="ECO:0007669"/>
    <property type="project" value="UniProtKB-UniRule"/>
</dbReference>
<dbReference type="GO" id="GO:0003723">
    <property type="term" value="F:RNA binding"/>
    <property type="evidence" value="ECO:0007669"/>
    <property type="project" value="InterPro"/>
</dbReference>
<dbReference type="GO" id="GO:0004523">
    <property type="term" value="F:RNA-DNA hybrid ribonuclease activity"/>
    <property type="evidence" value="ECO:0007669"/>
    <property type="project" value="UniProtKB-UniRule"/>
</dbReference>
<dbReference type="GO" id="GO:0043137">
    <property type="term" value="P:DNA replication, removal of RNA primer"/>
    <property type="evidence" value="ECO:0007669"/>
    <property type="project" value="TreeGrafter"/>
</dbReference>
<dbReference type="GO" id="GO:0006298">
    <property type="term" value="P:mismatch repair"/>
    <property type="evidence" value="ECO:0007669"/>
    <property type="project" value="TreeGrafter"/>
</dbReference>
<dbReference type="CDD" id="cd07182">
    <property type="entry name" value="RNase_HII_bacteria_HII_like"/>
    <property type="match status" value="1"/>
</dbReference>
<dbReference type="FunFam" id="3.30.420.10:FF:000006">
    <property type="entry name" value="Ribonuclease HII"/>
    <property type="match status" value="1"/>
</dbReference>
<dbReference type="Gene3D" id="3.30.420.10">
    <property type="entry name" value="Ribonuclease H-like superfamily/Ribonuclease H"/>
    <property type="match status" value="1"/>
</dbReference>
<dbReference type="HAMAP" id="MF_00052_B">
    <property type="entry name" value="RNase_HII_B"/>
    <property type="match status" value="1"/>
</dbReference>
<dbReference type="InterPro" id="IPR022898">
    <property type="entry name" value="RNase_HII"/>
</dbReference>
<dbReference type="InterPro" id="IPR001352">
    <property type="entry name" value="RNase_HII/HIII"/>
</dbReference>
<dbReference type="InterPro" id="IPR024567">
    <property type="entry name" value="RNase_HII/HIII_dom"/>
</dbReference>
<dbReference type="InterPro" id="IPR012337">
    <property type="entry name" value="RNaseH-like_sf"/>
</dbReference>
<dbReference type="InterPro" id="IPR036397">
    <property type="entry name" value="RNaseH_sf"/>
</dbReference>
<dbReference type="NCBIfam" id="NF000594">
    <property type="entry name" value="PRK00015.1-1"/>
    <property type="match status" value="1"/>
</dbReference>
<dbReference type="NCBIfam" id="NF000595">
    <property type="entry name" value="PRK00015.1-3"/>
    <property type="match status" value="1"/>
</dbReference>
<dbReference type="NCBIfam" id="NF000596">
    <property type="entry name" value="PRK00015.1-4"/>
    <property type="match status" value="1"/>
</dbReference>
<dbReference type="PANTHER" id="PTHR10954">
    <property type="entry name" value="RIBONUCLEASE H2 SUBUNIT A"/>
    <property type="match status" value="1"/>
</dbReference>
<dbReference type="PANTHER" id="PTHR10954:SF18">
    <property type="entry name" value="RIBONUCLEASE HII"/>
    <property type="match status" value="1"/>
</dbReference>
<dbReference type="Pfam" id="PF01351">
    <property type="entry name" value="RNase_HII"/>
    <property type="match status" value="1"/>
</dbReference>
<dbReference type="SUPFAM" id="SSF53098">
    <property type="entry name" value="Ribonuclease H-like"/>
    <property type="match status" value="1"/>
</dbReference>
<dbReference type="PROSITE" id="PS51975">
    <property type="entry name" value="RNASE_H_2"/>
    <property type="match status" value="1"/>
</dbReference>
<comment type="function">
    <text evidence="1">Endonuclease that specifically degrades the RNA of RNA-DNA hybrids.</text>
</comment>
<comment type="catalytic activity">
    <reaction evidence="1">
        <text>Endonucleolytic cleavage to 5'-phosphomonoester.</text>
        <dbReference type="EC" id="3.1.26.4"/>
    </reaction>
</comment>
<comment type="cofactor">
    <cofactor evidence="1">
        <name>Mn(2+)</name>
        <dbReference type="ChEBI" id="CHEBI:29035"/>
    </cofactor>
    <cofactor evidence="1">
        <name>Mg(2+)</name>
        <dbReference type="ChEBI" id="CHEBI:18420"/>
    </cofactor>
    <text evidence="1">Manganese or magnesium. Binds 1 divalent metal ion per monomer in the absence of substrate. May bind a second metal ion after substrate binding.</text>
</comment>
<comment type="subcellular location">
    <subcellularLocation>
        <location evidence="1">Cytoplasm</location>
    </subcellularLocation>
</comment>
<comment type="similarity">
    <text evidence="1">Belongs to the RNase HII family.</text>
</comment>
<proteinExistence type="inferred from homology"/>
<evidence type="ECO:0000255" key="1">
    <source>
        <dbReference type="HAMAP-Rule" id="MF_00052"/>
    </source>
</evidence>
<evidence type="ECO:0000255" key="2">
    <source>
        <dbReference type="PROSITE-ProRule" id="PRU01319"/>
    </source>
</evidence>
<protein>
    <recommendedName>
        <fullName evidence="1">Ribonuclease HII</fullName>
        <shortName evidence="1">RNase HII</shortName>
        <ecNumber evidence="1">3.1.26.4</ecNumber>
    </recommendedName>
</protein>
<gene>
    <name evidence="1" type="primary">rnhB</name>
    <name type="ordered locus">BMASAVP1_A2041</name>
</gene>
<organism>
    <name type="scientific">Burkholderia mallei (strain SAVP1)</name>
    <dbReference type="NCBI Taxonomy" id="320388"/>
    <lineage>
        <taxon>Bacteria</taxon>
        <taxon>Pseudomonadati</taxon>
        <taxon>Pseudomonadota</taxon>
        <taxon>Betaproteobacteria</taxon>
        <taxon>Burkholderiales</taxon>
        <taxon>Burkholderiaceae</taxon>
        <taxon>Burkholderia</taxon>
        <taxon>pseudomallei group</taxon>
    </lineage>
</organism>
<reference key="1">
    <citation type="journal article" date="2010" name="Genome Biol. Evol.">
        <title>Continuing evolution of Burkholderia mallei through genome reduction and large-scale rearrangements.</title>
        <authorList>
            <person name="Losada L."/>
            <person name="Ronning C.M."/>
            <person name="DeShazer D."/>
            <person name="Woods D."/>
            <person name="Fedorova N."/>
            <person name="Kim H.S."/>
            <person name="Shabalina S.A."/>
            <person name="Pearson T.R."/>
            <person name="Brinkac L."/>
            <person name="Tan P."/>
            <person name="Nandi T."/>
            <person name="Crabtree J."/>
            <person name="Badger J."/>
            <person name="Beckstrom-Sternberg S."/>
            <person name="Saqib M."/>
            <person name="Schutzer S.E."/>
            <person name="Keim P."/>
            <person name="Nierman W.C."/>
        </authorList>
    </citation>
    <scope>NUCLEOTIDE SEQUENCE [LARGE SCALE GENOMIC DNA]</scope>
    <source>
        <strain>SAVP1</strain>
    </source>
</reference>
<sequence length="214" mass="22655">MATTRKPRGGAGGATQPALDFDAPGEIVCGVDEAGRGPLAGPVVAAAVVLDPARPIVGLDDSKALSAKKRERLFDEIVAYALAYSVASASVEEIDSLNILHATMLAMKRAVEGLSVLPTLAKIDGNRCPMLAIRSEAIVGGDALVPSISAASILAKVTRDRMLVELHQQFPMYGFDAHAGYGTPQHLAALREHGPCEHHRRSFAPVREAFDLIR</sequence>
<keyword id="KW-0963">Cytoplasm</keyword>
<keyword id="KW-0255">Endonuclease</keyword>
<keyword id="KW-0378">Hydrolase</keyword>
<keyword id="KW-0464">Manganese</keyword>
<keyword id="KW-0479">Metal-binding</keyword>
<keyword id="KW-0540">Nuclease</keyword>
<name>RNH2_BURMS</name>
<accession>A1V554</accession>
<feature type="chain" id="PRO_1000031126" description="Ribonuclease HII">
    <location>
        <begin position="1"/>
        <end position="214"/>
    </location>
</feature>
<feature type="domain" description="RNase H type-2" evidence="2">
    <location>
        <begin position="26"/>
        <end position="214"/>
    </location>
</feature>
<feature type="binding site" evidence="1">
    <location>
        <position position="32"/>
    </location>
    <ligand>
        <name>a divalent metal cation</name>
        <dbReference type="ChEBI" id="CHEBI:60240"/>
    </ligand>
</feature>
<feature type="binding site" evidence="1">
    <location>
        <position position="33"/>
    </location>
    <ligand>
        <name>a divalent metal cation</name>
        <dbReference type="ChEBI" id="CHEBI:60240"/>
    </ligand>
</feature>
<feature type="binding site" evidence="1">
    <location>
        <position position="124"/>
    </location>
    <ligand>
        <name>a divalent metal cation</name>
        <dbReference type="ChEBI" id="CHEBI:60240"/>
    </ligand>
</feature>